<proteinExistence type="inferred from homology"/>
<name>DYLT_DICDI</name>
<reference key="1">
    <citation type="journal article" date="2005" name="Nature">
        <title>The genome of the social amoeba Dictyostelium discoideum.</title>
        <authorList>
            <person name="Eichinger L."/>
            <person name="Pachebat J.A."/>
            <person name="Gloeckner G."/>
            <person name="Rajandream M.A."/>
            <person name="Sucgang R."/>
            <person name="Berriman M."/>
            <person name="Song J."/>
            <person name="Olsen R."/>
            <person name="Szafranski K."/>
            <person name="Xu Q."/>
            <person name="Tunggal B."/>
            <person name="Kummerfeld S."/>
            <person name="Madera M."/>
            <person name="Konfortov B.A."/>
            <person name="Rivero F."/>
            <person name="Bankier A.T."/>
            <person name="Lehmann R."/>
            <person name="Hamlin N."/>
            <person name="Davies R."/>
            <person name="Gaudet P."/>
            <person name="Fey P."/>
            <person name="Pilcher K."/>
            <person name="Chen G."/>
            <person name="Saunders D."/>
            <person name="Sodergren E.J."/>
            <person name="Davis P."/>
            <person name="Kerhornou A."/>
            <person name="Nie X."/>
            <person name="Hall N."/>
            <person name="Anjard C."/>
            <person name="Hemphill L."/>
            <person name="Bason N."/>
            <person name="Farbrother P."/>
            <person name="Desany B."/>
            <person name="Just E."/>
            <person name="Morio T."/>
            <person name="Rost R."/>
            <person name="Churcher C.M."/>
            <person name="Cooper J."/>
            <person name="Haydock S."/>
            <person name="van Driessche N."/>
            <person name="Cronin A."/>
            <person name="Goodhead I."/>
            <person name="Muzny D.M."/>
            <person name="Mourier T."/>
            <person name="Pain A."/>
            <person name="Lu M."/>
            <person name="Harper D."/>
            <person name="Lindsay R."/>
            <person name="Hauser H."/>
            <person name="James K.D."/>
            <person name="Quiles M."/>
            <person name="Madan Babu M."/>
            <person name="Saito T."/>
            <person name="Buchrieser C."/>
            <person name="Wardroper A."/>
            <person name="Felder M."/>
            <person name="Thangavelu M."/>
            <person name="Johnson D."/>
            <person name="Knights A."/>
            <person name="Loulseged H."/>
            <person name="Mungall K.L."/>
            <person name="Oliver K."/>
            <person name="Price C."/>
            <person name="Quail M.A."/>
            <person name="Urushihara H."/>
            <person name="Hernandez J."/>
            <person name="Rabbinowitsch E."/>
            <person name="Steffen D."/>
            <person name="Sanders M."/>
            <person name="Ma J."/>
            <person name="Kohara Y."/>
            <person name="Sharp S."/>
            <person name="Simmonds M.N."/>
            <person name="Spiegler S."/>
            <person name="Tivey A."/>
            <person name="Sugano S."/>
            <person name="White B."/>
            <person name="Walker D."/>
            <person name="Woodward J.R."/>
            <person name="Winckler T."/>
            <person name="Tanaka Y."/>
            <person name="Shaulsky G."/>
            <person name="Schleicher M."/>
            <person name="Weinstock G.M."/>
            <person name="Rosenthal A."/>
            <person name="Cox E.C."/>
            <person name="Chisholm R.L."/>
            <person name="Gibbs R.A."/>
            <person name="Loomis W.F."/>
            <person name="Platzer M."/>
            <person name="Kay R.R."/>
            <person name="Williams J.G."/>
            <person name="Dear P.H."/>
            <person name="Noegel A.A."/>
            <person name="Barrell B.G."/>
            <person name="Kuspa A."/>
        </authorList>
    </citation>
    <scope>NUCLEOTIDE SEQUENCE [LARGE SCALE GENOMIC DNA]</scope>
    <source>
        <strain>AX4</strain>
    </source>
</reference>
<feature type="chain" id="PRO_0000333030" description="Dynein light chain Tctex-type">
    <location>
        <begin position="1"/>
        <end position="111"/>
    </location>
</feature>
<gene>
    <name type="primary">dlcA</name>
    <name type="synonym">tctel1</name>
    <name type="ORF">DDB_G0284589</name>
</gene>
<organism>
    <name type="scientific">Dictyostelium discoideum</name>
    <name type="common">Social amoeba</name>
    <dbReference type="NCBI Taxonomy" id="44689"/>
    <lineage>
        <taxon>Eukaryota</taxon>
        <taxon>Amoebozoa</taxon>
        <taxon>Evosea</taxon>
        <taxon>Eumycetozoa</taxon>
        <taxon>Dictyostelia</taxon>
        <taxon>Dictyosteliales</taxon>
        <taxon>Dictyosteliaceae</taxon>
        <taxon>Dictyostelium</taxon>
    </lineage>
</organism>
<comment type="function">
    <text evidence="1">Acts as a non-catalytic accessory component of a dynein complex.</text>
</comment>
<comment type="subcellular location">
    <subcellularLocation>
        <location evidence="2">Cytoplasm</location>
        <location evidence="2">Cytoskeleton</location>
    </subcellularLocation>
</comment>
<comment type="similarity">
    <text evidence="2">Belongs to the dynein light chain Tctex-type family.</text>
</comment>
<keyword id="KW-0963">Cytoplasm</keyword>
<keyword id="KW-0206">Cytoskeleton</keyword>
<keyword id="KW-0243">Dynein</keyword>
<keyword id="KW-0493">Microtubule</keyword>
<keyword id="KW-0505">Motor protein</keyword>
<keyword id="KW-1185">Reference proteome</keyword>
<dbReference type="EMBL" id="AAFI02000067">
    <property type="protein sequence ID" value="EAL65149.2"/>
    <property type="molecule type" value="Genomic_DNA"/>
</dbReference>
<dbReference type="RefSeq" id="XP_638499.2">
    <property type="nucleotide sequence ID" value="XM_633407.2"/>
</dbReference>
<dbReference type="SMR" id="Q54PG1"/>
<dbReference type="FunCoup" id="Q54PG1">
    <property type="interactions" value="32"/>
</dbReference>
<dbReference type="STRING" id="44689.Q54PG1"/>
<dbReference type="PaxDb" id="44689-DDB0233810"/>
<dbReference type="EnsemblProtists" id="EAL65149">
    <property type="protein sequence ID" value="EAL65149"/>
    <property type="gene ID" value="DDB_G0284589"/>
</dbReference>
<dbReference type="GeneID" id="8624663"/>
<dbReference type="KEGG" id="ddi:DDB_G0284589"/>
<dbReference type="dictyBase" id="DDB_G0284589">
    <property type="gene designation" value="dlcA"/>
</dbReference>
<dbReference type="VEuPathDB" id="AmoebaDB:DDB_G0284589"/>
<dbReference type="eggNOG" id="KOG4081">
    <property type="taxonomic scope" value="Eukaryota"/>
</dbReference>
<dbReference type="HOGENOM" id="CLU_097204_7_2_1"/>
<dbReference type="InParanoid" id="Q54PG1"/>
<dbReference type="OMA" id="HNDEMTF"/>
<dbReference type="PhylomeDB" id="Q54PG1"/>
<dbReference type="Reactome" id="R-DDI-6798695">
    <property type="pathway name" value="Neutrophil degranulation"/>
</dbReference>
<dbReference type="PRO" id="PR:Q54PG1"/>
<dbReference type="Proteomes" id="UP000002195">
    <property type="component" value="Chromosome 4"/>
</dbReference>
<dbReference type="GO" id="GO:0005737">
    <property type="term" value="C:cytoplasm"/>
    <property type="evidence" value="ECO:0000318"/>
    <property type="project" value="GO_Central"/>
</dbReference>
<dbReference type="GO" id="GO:0005868">
    <property type="term" value="C:cytoplasmic dynein complex"/>
    <property type="evidence" value="ECO:0000318"/>
    <property type="project" value="GO_Central"/>
</dbReference>
<dbReference type="GO" id="GO:0005874">
    <property type="term" value="C:microtubule"/>
    <property type="evidence" value="ECO:0007669"/>
    <property type="project" value="UniProtKB-KW"/>
</dbReference>
<dbReference type="GO" id="GO:0045505">
    <property type="term" value="F:dynein intermediate chain binding"/>
    <property type="evidence" value="ECO:0000318"/>
    <property type="project" value="GO_Central"/>
</dbReference>
<dbReference type="GO" id="GO:0007018">
    <property type="term" value="P:microtubule-based movement"/>
    <property type="evidence" value="ECO:0000318"/>
    <property type="project" value="GO_Central"/>
</dbReference>
<dbReference type="CDD" id="cd21455">
    <property type="entry name" value="DLC-like_DYNLT1_DYNLT3"/>
    <property type="match status" value="1"/>
</dbReference>
<dbReference type="Gene3D" id="3.30.1140.40">
    <property type="entry name" value="Tctex-1"/>
    <property type="match status" value="1"/>
</dbReference>
<dbReference type="InterPro" id="IPR005334">
    <property type="entry name" value="Tctex-1-like"/>
</dbReference>
<dbReference type="InterPro" id="IPR038586">
    <property type="entry name" value="Tctex-1-like_sf"/>
</dbReference>
<dbReference type="PANTHER" id="PTHR21255:SF4">
    <property type="entry name" value="DYNEIN LIGHT CHAIN TCTEX-TYPE"/>
    <property type="match status" value="1"/>
</dbReference>
<dbReference type="PANTHER" id="PTHR21255">
    <property type="entry name" value="T-COMPLEX-ASSOCIATED-TESTIS-EXPRESSED 1/ DYNEIN LIGHT CHAIN"/>
    <property type="match status" value="1"/>
</dbReference>
<dbReference type="Pfam" id="PF03645">
    <property type="entry name" value="Tctex-1"/>
    <property type="match status" value="1"/>
</dbReference>
<accession>Q54PG1</accession>
<protein>
    <recommendedName>
        <fullName>Dynein light chain Tctex-type</fullName>
    </recommendedName>
    <alternativeName>
        <fullName>TCTEX-1 protein homolog</fullName>
    </alternativeName>
</protein>
<sequence length="111" mass="12690">MSTEIDQPFVVEEILTIIKEAVEISLQNTVYQHKQVPQWTQSIIDHSLKKISELNNKSYKYIVNCLIFQKTGAGFHTASSCLWDSANDGSCSYRWENKSMHCIISVFGCKI</sequence>
<evidence type="ECO:0000250" key="1"/>
<evidence type="ECO:0000305" key="2"/>